<keyword id="KW-0963">Cytoplasm</keyword>
<keyword id="KW-0539">Nucleus</keyword>
<keyword id="KW-0653">Protein transport</keyword>
<keyword id="KW-1185">Reference proteome</keyword>
<keyword id="KW-0677">Repeat</keyword>
<keyword id="KW-0813">Transport</keyword>
<accession>Q5ZIC8</accession>
<sequence length="958" mass="107776">MERRAEAPPPPQGLDFTVENVEKALHQLYYDPNIENKNLAQKWLMQAQVSPQAWHFSWLLLNMDKVPEIQYSAPAPCTSRSPATGTTSLPDQYESLKSQLFTHITRFAGGSKIVLTRLCVALASLALSMMPEAWPCAVADMVRMFQAEDSNVDGRARCLALLELLTVLPEEFQTSRLPQYRKGQVRSVLAQECGSVFPLLEQLLQQQDSPGFIKQKVLKCFSSWVQLEIPLMDCENLIQAAFTSLQDPELFDTAVEAVVNAISQPDAQRYVNTLLKLIPPVLGLQEQLRQAVQSGDMETSHGICRIAVALGENHSRALLDQVEHWQSFLALVNMIMFCTGIPGHYPVNETTSSLTLTFWYTLQDDILSFEPDKQAVYQQVYRPVYFQLVDVLLHKAQFPSDEEYGFWSSDEKEQFRIYRVDISDTLMYVYEMLGAELLSSLYDKLGRLLTNTEQPSTWQHTEALLYGFQSIAETIDVNYSDVVPGLIGLIPRISISNVQLADTVMFTIGALSEWLADHPVMINNVLPLVLQALGNPELSISSVSTLKKICRECKYDLPPYAANIVAVSQEVLMKQIHKTSQCMWLMQALGFLLSALQVEEILKNLHSLITPYIQQLEKLADETPNPSNKLAIIHILGLLSNLFTTLDISHHDDDHESTEVKKLPVQQGPNPVVVVLQQVFQLIQKVLSKWLNDAQVVESVCAIFEKSVKTLLDDFAPMVPQLCEMLGQMYSTIPQASAIDLTRQLVHIFAHEPAHFPPIKALFLLVTSVTLTLFQQGPRDHPDIVDSFMQLLAQALKRKPDLFLCSNLDVKALFHCGVLSLKFPEAPTVKASCGFFTELLPRCGEIAPVGQVVHENGKVLLQAVLEGVGGQASRSLMDHFAEILFALNKHCFSYLSIWIKEAMQQDGFPSARVSPEQKETFSQQILRERVNKRRVKEMVKEFTLLCRGLHGTEYTADY</sequence>
<dbReference type="EMBL" id="AJ720856">
    <property type="protein sequence ID" value="CAG32515.1"/>
    <property type="molecule type" value="mRNA"/>
</dbReference>
<dbReference type="RefSeq" id="NP_001006537.1">
    <property type="nucleotide sequence ID" value="NM_001006537.1"/>
</dbReference>
<dbReference type="SMR" id="Q5ZIC8"/>
<dbReference type="FunCoup" id="Q5ZIC8">
    <property type="interactions" value="2131"/>
</dbReference>
<dbReference type="STRING" id="9031.ENSGALP00000050448"/>
<dbReference type="PaxDb" id="9031-ENSGALP00000016380"/>
<dbReference type="KEGG" id="gga:424573"/>
<dbReference type="VEuPathDB" id="HostDB:geneid_424573"/>
<dbReference type="eggNOG" id="KOG2022">
    <property type="taxonomic scope" value="Eukaryota"/>
</dbReference>
<dbReference type="InParanoid" id="Q5ZIC8"/>
<dbReference type="OrthoDB" id="2016913at2759"/>
<dbReference type="PhylomeDB" id="Q5ZIC8"/>
<dbReference type="PRO" id="PR:Q5ZIC8"/>
<dbReference type="Proteomes" id="UP000000539">
    <property type="component" value="Unassembled WGS sequence"/>
</dbReference>
<dbReference type="GO" id="GO:0005737">
    <property type="term" value="C:cytoplasm"/>
    <property type="evidence" value="ECO:0000318"/>
    <property type="project" value="GO_Central"/>
</dbReference>
<dbReference type="GO" id="GO:0005634">
    <property type="term" value="C:nucleus"/>
    <property type="evidence" value="ECO:0007669"/>
    <property type="project" value="UniProtKB-SubCell"/>
</dbReference>
<dbReference type="GO" id="GO:0006606">
    <property type="term" value="P:protein import into nucleus"/>
    <property type="evidence" value="ECO:0000318"/>
    <property type="project" value="GO_Central"/>
</dbReference>
<dbReference type="FunFam" id="1.25.10.10:FF:000107">
    <property type="entry name" value="Importin-13"/>
    <property type="match status" value="1"/>
</dbReference>
<dbReference type="Gene3D" id="1.25.10.10">
    <property type="entry name" value="Leucine-rich Repeat Variant"/>
    <property type="match status" value="1"/>
</dbReference>
<dbReference type="InterPro" id="IPR011989">
    <property type="entry name" value="ARM-like"/>
</dbReference>
<dbReference type="InterPro" id="IPR016024">
    <property type="entry name" value="ARM-type_fold"/>
</dbReference>
<dbReference type="InterPro" id="IPR013598">
    <property type="entry name" value="Exportin-1/Importin-b-like"/>
</dbReference>
<dbReference type="InterPro" id="IPR051345">
    <property type="entry name" value="Importin_beta-like_NTR"/>
</dbReference>
<dbReference type="InterPro" id="IPR040709">
    <property type="entry name" value="Importin_rep_1"/>
</dbReference>
<dbReference type="InterPro" id="IPR040944">
    <property type="entry name" value="Importin_rep_2"/>
</dbReference>
<dbReference type="InterPro" id="IPR040520">
    <property type="entry name" value="Importin_rep_3"/>
</dbReference>
<dbReference type="PANTHER" id="PTHR12363:SF33">
    <property type="entry name" value="IMPORTIN-13"/>
    <property type="match status" value="1"/>
</dbReference>
<dbReference type="PANTHER" id="PTHR12363">
    <property type="entry name" value="TRANSPORTIN 3 AND IMPORTIN 13"/>
    <property type="match status" value="1"/>
</dbReference>
<dbReference type="Pfam" id="PF18773">
    <property type="entry name" value="Importin_rep"/>
    <property type="match status" value="1"/>
</dbReference>
<dbReference type="Pfam" id="PF18786">
    <property type="entry name" value="Importin_rep_2"/>
    <property type="match status" value="2"/>
</dbReference>
<dbReference type="Pfam" id="PF18806">
    <property type="entry name" value="Importin_rep_3"/>
    <property type="match status" value="1"/>
</dbReference>
<dbReference type="Pfam" id="PF24138">
    <property type="entry name" value="TPR_TNPO3_IPO13_2nd"/>
    <property type="match status" value="1"/>
</dbReference>
<dbReference type="Pfam" id="PF24140">
    <property type="entry name" value="TPR_TNPO3_IPO13_3rd"/>
    <property type="match status" value="1"/>
</dbReference>
<dbReference type="Pfam" id="PF24139">
    <property type="entry name" value="TPR_TNPO3_IPO13_4th"/>
    <property type="match status" value="1"/>
</dbReference>
<dbReference type="Pfam" id="PF08389">
    <property type="entry name" value="Xpo1"/>
    <property type="match status" value="1"/>
</dbReference>
<dbReference type="SUPFAM" id="SSF48371">
    <property type="entry name" value="ARM repeat"/>
    <property type="match status" value="1"/>
</dbReference>
<gene>
    <name type="primary">IPO13</name>
    <name type="ORF">RCJMB04_27p9</name>
</gene>
<reference key="1">
    <citation type="journal article" date="2005" name="Genome Biol.">
        <title>Full-length cDNAs from chicken bursal lymphocytes to facilitate gene function analysis.</title>
        <authorList>
            <person name="Caldwell R.B."/>
            <person name="Kierzek A.M."/>
            <person name="Arakawa H."/>
            <person name="Bezzubov Y."/>
            <person name="Zaim J."/>
            <person name="Fiedler P."/>
            <person name="Kutter S."/>
            <person name="Blagodatski A."/>
            <person name="Kostovska D."/>
            <person name="Koter M."/>
            <person name="Plachy J."/>
            <person name="Carninci P."/>
            <person name="Hayashizaki Y."/>
            <person name="Buerstedde J.-M."/>
        </authorList>
    </citation>
    <scope>NUCLEOTIDE SEQUENCE [LARGE SCALE MRNA]</scope>
    <source>
        <strain>CB</strain>
        <tissue>Bursa of Fabricius</tissue>
    </source>
</reference>
<evidence type="ECO:0000250" key="1"/>
<evidence type="ECO:0000305" key="2"/>
<organism>
    <name type="scientific">Gallus gallus</name>
    <name type="common">Chicken</name>
    <dbReference type="NCBI Taxonomy" id="9031"/>
    <lineage>
        <taxon>Eukaryota</taxon>
        <taxon>Metazoa</taxon>
        <taxon>Chordata</taxon>
        <taxon>Craniata</taxon>
        <taxon>Vertebrata</taxon>
        <taxon>Euteleostomi</taxon>
        <taxon>Archelosauria</taxon>
        <taxon>Archosauria</taxon>
        <taxon>Dinosauria</taxon>
        <taxon>Saurischia</taxon>
        <taxon>Theropoda</taxon>
        <taxon>Coelurosauria</taxon>
        <taxon>Aves</taxon>
        <taxon>Neognathae</taxon>
        <taxon>Galloanserae</taxon>
        <taxon>Galliformes</taxon>
        <taxon>Phasianidae</taxon>
        <taxon>Phasianinae</taxon>
        <taxon>Gallus</taxon>
    </lineage>
</organism>
<protein>
    <recommendedName>
        <fullName>Importin-13</fullName>
        <shortName>Imp13</shortName>
    </recommendedName>
</protein>
<name>IPO13_CHICK</name>
<proteinExistence type="evidence at transcript level"/>
<feature type="chain" id="PRO_0000357048" description="Importin-13">
    <location>
        <begin position="1"/>
        <end position="958"/>
    </location>
</feature>
<feature type="repeat" description="HEAT 1">
    <location>
        <begin position="19"/>
        <end position="49"/>
    </location>
</feature>
<feature type="domain" description="Importin N-terminal">
    <location>
        <begin position="40"/>
        <end position="106"/>
    </location>
</feature>
<feature type="repeat" description="HEAT 2">
    <location>
        <begin position="51"/>
        <end position="83"/>
    </location>
</feature>
<feature type="repeat" description="HEAT 3">
    <location>
        <begin position="90"/>
        <end position="130"/>
    </location>
</feature>
<feature type="repeat" description="HEAT 4">
    <location>
        <begin position="137"/>
        <end position="174"/>
    </location>
</feature>
<feature type="repeat" description="HEAT 5">
    <location>
        <begin position="189"/>
        <end position="226"/>
    </location>
</feature>
<feature type="repeat" description="HEAT 6">
    <location>
        <begin position="231"/>
        <end position="263"/>
    </location>
</feature>
<feature type="repeat" description="HEAT 7">
    <location>
        <begin position="271"/>
        <end position="320"/>
    </location>
</feature>
<feature type="repeat" description="HEAT 8">
    <location>
        <begin position="325"/>
        <end position="367"/>
    </location>
</feature>
<feature type="repeat" description="HEAT 9">
    <location>
        <begin position="370"/>
        <end position="433"/>
    </location>
</feature>
<feature type="repeat" description="HEAT 10">
    <location>
        <begin position="435"/>
        <end position="471"/>
    </location>
</feature>
<feature type="repeat" description="HEAT 11">
    <location>
        <begin position="482"/>
        <end position="517"/>
    </location>
</feature>
<feature type="repeat" description="HEAT 12">
    <location>
        <begin position="519"/>
        <end position="553"/>
    </location>
</feature>
<feature type="repeat" description="HEAT 13">
    <location>
        <begin position="557"/>
        <end position="595"/>
    </location>
</feature>
<feature type="repeat" description="HEAT 14">
    <location>
        <begin position="598"/>
        <end position="643"/>
    </location>
</feature>
<feature type="repeat" description="HEAT 15">
    <location>
        <begin position="671"/>
        <end position="711"/>
    </location>
</feature>
<feature type="repeat" description="HEAT 16">
    <location>
        <begin position="715"/>
        <end position="749"/>
    </location>
</feature>
<feature type="repeat" description="HEAT 17">
    <location>
        <begin position="756"/>
        <end position="798"/>
    </location>
</feature>
<feature type="repeat" description="HEAT 18">
    <location>
        <begin position="810"/>
        <end position="840"/>
    </location>
</feature>
<feature type="repeat" description="HEAT 19">
    <location>
        <begin position="855"/>
        <end position="888"/>
    </location>
</feature>
<feature type="repeat" description="HEAT 20">
    <location>
        <begin position="892"/>
        <end position="926"/>
    </location>
</feature>
<comment type="function">
    <text evidence="1">Functions in nuclear protein import as nuclear transport receptor. Serves as receptor for nuclear localization signals (NLS) in cargo substrates. Is thought to mediate docking of the importin/substrate complex to the nuclear pore complex (NPC) through binding to nucleoporin and the complex is subsequently translocated through the pore by an energy requiring, Ran-dependent mechanism. At the nucleoplasmic side of the NPC, Ran binds to the importin, the importin/substrate complex dissociates and importin is re-exported from the nucleus to the cytoplasm where GTP hydrolysis releases Ran. The directionality of nuclear import is thought to be conferred by an asymmetric distribution of the GTP- and GDP-bound forms of Ran between the cytoplasm and nucleus (By similarity).</text>
</comment>
<comment type="subcellular location">
    <subcellularLocation>
        <location evidence="1">Cytoplasm</location>
    </subcellularLocation>
    <subcellularLocation>
        <location evidence="1">Nucleus</location>
    </subcellularLocation>
</comment>
<comment type="similarity">
    <text evidence="2">Belongs to the importin beta family.</text>
</comment>